<organism>
    <name type="scientific">Macaca mulatta</name>
    <name type="common">Rhesus macaque</name>
    <dbReference type="NCBI Taxonomy" id="9544"/>
    <lineage>
        <taxon>Eukaryota</taxon>
        <taxon>Metazoa</taxon>
        <taxon>Chordata</taxon>
        <taxon>Craniata</taxon>
        <taxon>Vertebrata</taxon>
        <taxon>Euteleostomi</taxon>
        <taxon>Mammalia</taxon>
        <taxon>Eutheria</taxon>
        <taxon>Euarchontoglires</taxon>
        <taxon>Primates</taxon>
        <taxon>Haplorrhini</taxon>
        <taxon>Catarrhini</taxon>
        <taxon>Cercopithecidae</taxon>
        <taxon>Cercopithecinae</taxon>
        <taxon>Macaca</taxon>
    </lineage>
</organism>
<dbReference type="EMBL" id="L26024">
    <property type="protein sequence ID" value="AAA99973.1"/>
    <property type="molecule type" value="mRNA"/>
</dbReference>
<dbReference type="EMBL" id="AY376145">
    <property type="protein sequence ID" value="AAQ87963.1"/>
    <property type="molecule type" value="mRNA"/>
</dbReference>
<dbReference type="RefSeq" id="NP_001028077.1">
    <property type="nucleotide sequence ID" value="NM_001032905.1"/>
</dbReference>
<dbReference type="SMR" id="P63310"/>
<dbReference type="FunCoup" id="P63310">
    <property type="interactions" value="854"/>
</dbReference>
<dbReference type="STRING" id="9544.ENSMMUP00000065064"/>
<dbReference type="GlyCosmos" id="P63310">
    <property type="glycosylation" value="2 sites, No reported glycans"/>
</dbReference>
<dbReference type="PaxDb" id="9544-ENSMMUP00000025266"/>
<dbReference type="Ensembl" id="ENSMMUT00000093351.1">
    <property type="protein sequence ID" value="ENSMMUP00000065064.1"/>
    <property type="gene ID" value="ENSMMUG00000056408.1"/>
</dbReference>
<dbReference type="GeneID" id="574282"/>
<dbReference type="KEGG" id="mcc:574282"/>
<dbReference type="CTD" id="3458"/>
<dbReference type="VEuPathDB" id="HostDB:ENSMMUG00000056408"/>
<dbReference type="VGNC" id="VGNC:73568">
    <property type="gene designation" value="IFNG"/>
</dbReference>
<dbReference type="eggNOG" id="ENOG502SBGW">
    <property type="taxonomic scope" value="Eukaryota"/>
</dbReference>
<dbReference type="GeneTree" id="ENSGT00390000007831"/>
<dbReference type="HOGENOM" id="CLU_135106_0_0_1"/>
<dbReference type="InParanoid" id="P63310"/>
<dbReference type="OMA" id="QIVSMYL"/>
<dbReference type="OrthoDB" id="9937106at2759"/>
<dbReference type="TreeFam" id="TF336308"/>
<dbReference type="Proteomes" id="UP000006718">
    <property type="component" value="Chromosome 11"/>
</dbReference>
<dbReference type="Bgee" id="ENSMMUG00000056408">
    <property type="expression patterns" value="Expressed in colon and 2 other cell types or tissues"/>
</dbReference>
<dbReference type="GO" id="GO:0005615">
    <property type="term" value="C:extracellular space"/>
    <property type="evidence" value="ECO:0000318"/>
    <property type="project" value="GO_Central"/>
</dbReference>
<dbReference type="GO" id="GO:0005125">
    <property type="term" value="F:cytokine activity"/>
    <property type="evidence" value="ECO:0000318"/>
    <property type="project" value="GO_Central"/>
</dbReference>
<dbReference type="GO" id="GO:0005133">
    <property type="term" value="F:type II interferon receptor binding"/>
    <property type="evidence" value="ECO:0007669"/>
    <property type="project" value="InterPro"/>
</dbReference>
<dbReference type="GO" id="GO:0002250">
    <property type="term" value="P:adaptive immune response"/>
    <property type="evidence" value="ECO:0000318"/>
    <property type="project" value="GO_Central"/>
</dbReference>
<dbReference type="GO" id="GO:0048143">
    <property type="term" value="P:astrocyte activation"/>
    <property type="evidence" value="ECO:0007669"/>
    <property type="project" value="Ensembl"/>
</dbReference>
<dbReference type="GO" id="GO:0097696">
    <property type="term" value="P:cell surface receptor signaling pathway via STAT"/>
    <property type="evidence" value="ECO:0007669"/>
    <property type="project" value="Ensembl"/>
</dbReference>
<dbReference type="GO" id="GO:0051607">
    <property type="term" value="P:defense response to virus"/>
    <property type="evidence" value="ECO:0007669"/>
    <property type="project" value="UniProtKB-KW"/>
</dbReference>
<dbReference type="GO" id="GO:0097191">
    <property type="term" value="P:extrinsic apoptotic signaling pathway"/>
    <property type="evidence" value="ECO:0007669"/>
    <property type="project" value="Ensembl"/>
</dbReference>
<dbReference type="GO" id="GO:0038096">
    <property type="term" value="P:Fc-gamma receptor signaling pathway involved in phagocytosis"/>
    <property type="evidence" value="ECO:0007669"/>
    <property type="project" value="Ensembl"/>
</dbReference>
<dbReference type="GO" id="GO:0006959">
    <property type="term" value="P:humoral immune response"/>
    <property type="evidence" value="ECO:0000318"/>
    <property type="project" value="GO_Central"/>
</dbReference>
<dbReference type="GO" id="GO:0002281">
    <property type="term" value="P:macrophage activation involved in immune response"/>
    <property type="evidence" value="ECO:0007669"/>
    <property type="project" value="Ensembl"/>
</dbReference>
<dbReference type="GO" id="GO:0030225">
    <property type="term" value="P:macrophage differentiation"/>
    <property type="evidence" value="ECO:0007669"/>
    <property type="project" value="Ensembl"/>
</dbReference>
<dbReference type="GO" id="GO:0001774">
    <property type="term" value="P:microglial cell activation"/>
    <property type="evidence" value="ECO:0007669"/>
    <property type="project" value="Ensembl"/>
</dbReference>
<dbReference type="GO" id="GO:0045892">
    <property type="term" value="P:negative regulation of DNA-templated transcription"/>
    <property type="evidence" value="ECO:0007669"/>
    <property type="project" value="Ensembl"/>
</dbReference>
<dbReference type="GO" id="GO:0032700">
    <property type="term" value="P:negative regulation of interleukin-17 production"/>
    <property type="evidence" value="ECO:0007669"/>
    <property type="project" value="Ensembl"/>
</dbReference>
<dbReference type="GO" id="GO:0048662">
    <property type="term" value="P:negative regulation of smooth muscle cell proliferation"/>
    <property type="evidence" value="ECO:0007669"/>
    <property type="project" value="Ensembl"/>
</dbReference>
<dbReference type="GO" id="GO:1902004">
    <property type="term" value="P:positive regulation of amyloid-beta formation"/>
    <property type="evidence" value="ECO:0007669"/>
    <property type="project" value="Ensembl"/>
</dbReference>
<dbReference type="GO" id="GO:0010508">
    <property type="term" value="P:positive regulation of autophagy"/>
    <property type="evidence" value="ECO:0000250"/>
    <property type="project" value="UniProtKB"/>
</dbReference>
<dbReference type="GO" id="GO:0032834">
    <property type="term" value="P:positive regulation of CD4-positive, CD25-positive, alpha-beta regulatory T cell differentiation involved in immune response"/>
    <property type="evidence" value="ECO:0007669"/>
    <property type="project" value="Ensembl"/>
</dbReference>
<dbReference type="GO" id="GO:0032722">
    <property type="term" value="P:positive regulation of chemokine production"/>
    <property type="evidence" value="ECO:0007669"/>
    <property type="project" value="Ensembl"/>
</dbReference>
<dbReference type="GO" id="GO:0010634">
    <property type="term" value="P:positive regulation of epithelial cell migration"/>
    <property type="evidence" value="ECO:0007669"/>
    <property type="project" value="Ensembl"/>
</dbReference>
<dbReference type="GO" id="GO:0060552">
    <property type="term" value="P:positive regulation of fructose 1,6-bisphosphate metabolic process"/>
    <property type="evidence" value="ECO:0007669"/>
    <property type="project" value="Ensembl"/>
</dbReference>
<dbReference type="GO" id="GO:0050729">
    <property type="term" value="P:positive regulation of inflammatory response"/>
    <property type="evidence" value="ECO:0007669"/>
    <property type="project" value="Ensembl"/>
</dbReference>
<dbReference type="GO" id="GO:0032735">
    <property type="term" value="P:positive regulation of interleukin-12 production"/>
    <property type="evidence" value="ECO:0007669"/>
    <property type="project" value="Ensembl"/>
</dbReference>
<dbReference type="GO" id="GO:0032747">
    <property type="term" value="P:positive regulation of interleukin-23 production"/>
    <property type="evidence" value="ECO:0007669"/>
    <property type="project" value="Ensembl"/>
</dbReference>
<dbReference type="GO" id="GO:0032755">
    <property type="term" value="P:positive regulation of interleukin-6 production"/>
    <property type="evidence" value="ECO:0007669"/>
    <property type="project" value="Ensembl"/>
</dbReference>
<dbReference type="GO" id="GO:0051044">
    <property type="term" value="P:positive regulation of membrane protein ectodomain proteolysis"/>
    <property type="evidence" value="ECO:0007669"/>
    <property type="project" value="Ensembl"/>
</dbReference>
<dbReference type="GO" id="GO:0050769">
    <property type="term" value="P:positive regulation of neurogenesis"/>
    <property type="evidence" value="ECO:0007669"/>
    <property type="project" value="Ensembl"/>
</dbReference>
<dbReference type="GO" id="GO:0045429">
    <property type="term" value="P:positive regulation of nitric oxide biosynthetic process"/>
    <property type="evidence" value="ECO:0007669"/>
    <property type="project" value="Ensembl"/>
</dbReference>
<dbReference type="GO" id="GO:0045672">
    <property type="term" value="P:positive regulation of osteoclast differentiation"/>
    <property type="evidence" value="ECO:0007669"/>
    <property type="project" value="Ensembl"/>
</dbReference>
<dbReference type="GO" id="GO:0042307">
    <property type="term" value="P:positive regulation of protein import into nucleus"/>
    <property type="evidence" value="ECO:0007669"/>
    <property type="project" value="Ensembl"/>
</dbReference>
<dbReference type="GO" id="GO:0031334">
    <property type="term" value="P:positive regulation of protein-containing complex assembly"/>
    <property type="evidence" value="ECO:0007669"/>
    <property type="project" value="Ensembl"/>
</dbReference>
<dbReference type="GO" id="GO:0034393">
    <property type="term" value="P:positive regulation of smooth muscle cell apoptotic process"/>
    <property type="evidence" value="ECO:0007669"/>
    <property type="project" value="Ensembl"/>
</dbReference>
<dbReference type="GO" id="GO:2000309">
    <property type="term" value="P:positive regulation of tumor necrosis factor (ligand) superfamily member 11 production"/>
    <property type="evidence" value="ECO:0007669"/>
    <property type="project" value="Ensembl"/>
</dbReference>
<dbReference type="GO" id="GO:0060557">
    <property type="term" value="P:positive regulation of vitamin D biosynthetic process"/>
    <property type="evidence" value="ECO:0007669"/>
    <property type="project" value="Ensembl"/>
</dbReference>
<dbReference type="GO" id="GO:0050796">
    <property type="term" value="P:regulation of insulin secretion"/>
    <property type="evidence" value="ECO:0007669"/>
    <property type="project" value="Ensembl"/>
</dbReference>
<dbReference type="GO" id="GO:0060333">
    <property type="term" value="P:type II interferon-mediated signaling pathway"/>
    <property type="evidence" value="ECO:0007669"/>
    <property type="project" value="Ensembl"/>
</dbReference>
<dbReference type="GO" id="GO:0038196">
    <property type="term" value="P:type III interferon-mediated signaling pathway"/>
    <property type="evidence" value="ECO:0007669"/>
    <property type="project" value="Ensembl"/>
</dbReference>
<dbReference type="FunFam" id="1.20.1250.10:FF:000007">
    <property type="entry name" value="Interferon gamma"/>
    <property type="match status" value="1"/>
</dbReference>
<dbReference type="Gene3D" id="1.20.1250.10">
    <property type="match status" value="1"/>
</dbReference>
<dbReference type="InterPro" id="IPR009079">
    <property type="entry name" value="4_helix_cytokine-like_core"/>
</dbReference>
<dbReference type="InterPro" id="IPR002069">
    <property type="entry name" value="Interferon_gamma"/>
</dbReference>
<dbReference type="PANTHER" id="PTHR11419">
    <property type="entry name" value="INTERFERON GAMMA"/>
    <property type="match status" value="1"/>
</dbReference>
<dbReference type="PANTHER" id="PTHR11419:SF0">
    <property type="entry name" value="INTERFERON GAMMA"/>
    <property type="match status" value="1"/>
</dbReference>
<dbReference type="Pfam" id="PF00714">
    <property type="entry name" value="IFN-gamma"/>
    <property type="match status" value="1"/>
</dbReference>
<dbReference type="PIRSF" id="PIRSF001936">
    <property type="entry name" value="IFN-gamma"/>
    <property type="match status" value="1"/>
</dbReference>
<dbReference type="SUPFAM" id="SSF47266">
    <property type="entry name" value="4-helical cytokines"/>
    <property type="match status" value="1"/>
</dbReference>
<name>IFNG_MACMU</name>
<sequence length="165" mass="19332">MKYTSYILAFQLCIVLGSLGCYCQDPYVKEAENLKKYFNAGDPDVADNGTLFLDILRNWKEESDRKIMQSQIVSFYFKLFKNFKDDQRIQKSVETIKEDINVKFFNSNKKKRDDFEKLTNYSVTDSNVQRKAVHELIQVMAELSPAAKIGKRKRSQMFRGRRASQ</sequence>
<gene>
    <name type="primary">IFNG</name>
</gene>
<evidence type="ECO:0000250" key="1"/>
<evidence type="ECO:0000250" key="2">
    <source>
        <dbReference type="UniProtKB" id="P01579"/>
    </source>
</evidence>
<evidence type="ECO:0000250" key="3">
    <source>
        <dbReference type="UniProtKB" id="P01580"/>
    </source>
</evidence>
<evidence type="ECO:0000255" key="4"/>
<evidence type="ECO:0000305" key="5"/>
<reference key="1">
    <citation type="journal article" date="1995" name="J. Immunol.">
        <title>Comparative sequence analysis of cytokine genes from human and nonhuman primates.</title>
        <authorList>
            <person name="Villinger F.J."/>
            <person name="Brar S.S."/>
            <person name="Mayne A.E."/>
            <person name="Chikkala N."/>
            <person name="Ansari A.A."/>
        </authorList>
    </citation>
    <scope>NUCLEOTIDE SEQUENCE [MRNA]</scope>
</reference>
<reference key="2">
    <citation type="journal article" date="2003" name="Virology">
        <title>Replication, immunogenicity, and protective properties of live-attenuated simian immunodeficiency viruses expressing interleukin-4 or interferon-gamma.</title>
        <authorList>
            <person name="Stahl-Hennig C."/>
            <person name="Gundlach B.R."/>
            <person name="Dittmer U."/>
            <person name="ten Haaft P."/>
            <person name="Heeney J."/>
            <person name="Zou W."/>
            <person name="Emilie D."/>
            <person name="Sopper S."/>
            <person name="Uberla K."/>
        </authorList>
    </citation>
    <scope>NUCLEOTIDE SEQUENCE [MRNA]</scope>
</reference>
<accession>P63310</accession>
<accession>P42163</accession>
<accession>P42164</accession>
<accession>Q53Z08</accession>
<feature type="signal peptide" evidence="1">
    <location>
        <begin position="1"/>
        <end position="23"/>
    </location>
</feature>
<feature type="chain" id="PRO_0000016447" description="Interferon gamma">
    <location>
        <begin position="24"/>
        <end position="165"/>
    </location>
</feature>
<feature type="modified residue" description="Pyrrolidone carboxylic acid" evidence="2">
    <location>
        <position position="24"/>
    </location>
</feature>
<feature type="glycosylation site" description="N-linked (GlcNAc...) asparagine" evidence="4">
    <location>
        <position position="48"/>
    </location>
</feature>
<feature type="glycosylation site" description="N-linked (GlcNAc...) asparagine" evidence="4">
    <location>
        <position position="120"/>
    </location>
</feature>
<proteinExistence type="evidence at transcript level"/>
<comment type="function">
    <text evidence="2 3">Type II interferon produced by immune cells such as T-cells and NK cells that plays crucial roles in antimicrobial, antiviral, and antitumor responses by activating effector immune cells and enhancing antigen presentation. Primarily signals through the JAK-STAT pathway after interaction with its receptor IFNGR1 to affect gene regulation. Upon IFNG binding, IFNGR1 intracellular domain opens out to allow association of downstream signaling components JAK2, JAK1 and STAT1, leading to STAT1 activation, nuclear translocation and transcription of IFNG-regulated genes. Many of the induced genes are transcription factors such as IRF1 that are able to further drive regulation of a next wave of transcription. Plays a role in class I antigen presentation pathway by inducing a replacement of catalytic proteasome subunits with immunoproteasome subunits. In turn, increases the quantity, quality, and repertoire of peptides for class I MHC loading. Increases the efficiency of peptide generation also by inducing the expression of activator PA28 that associates with the proteasome and alters its proteolytic cleavage preference. Up-regulates as well MHC II complexes on the cell surface by promoting expression of several key molecules such as cathepsins B/CTSB, H/CTSH, and L/CTSL (By similarity). Participates in the regulation of hematopoietic stem cells during development and under homeostatic conditions by affecting their development, quiescence, and differentiation (By similarity).</text>
</comment>
<comment type="subunit">
    <text evidence="2">Homodimer. Interacts with IFNGR1 (via extracellular domain); this interaction promotes IFNGR1 dimerization.</text>
</comment>
<comment type="subcellular location">
    <subcellularLocation>
        <location evidence="2">Secreted</location>
    </subcellularLocation>
</comment>
<comment type="tissue specificity">
    <text>Released primarily from activated T lymphocytes.</text>
</comment>
<comment type="similarity">
    <text evidence="5">Belongs to the type II (or gamma) interferon family.</text>
</comment>
<protein>
    <recommendedName>
        <fullName>Interferon gamma</fullName>
        <shortName>IFN-gamma</shortName>
    </recommendedName>
</protein>
<keyword id="KW-0051">Antiviral defense</keyword>
<keyword id="KW-0202">Cytokine</keyword>
<keyword id="KW-0325">Glycoprotein</keyword>
<keyword id="KW-0341">Growth regulation</keyword>
<keyword id="KW-0873">Pyrrolidone carboxylic acid</keyword>
<keyword id="KW-1185">Reference proteome</keyword>
<keyword id="KW-0964">Secreted</keyword>
<keyword id="KW-0732">Signal</keyword>